<organism>
    <name type="scientific">Bos taurus</name>
    <name type="common">Bovine</name>
    <dbReference type="NCBI Taxonomy" id="9913"/>
    <lineage>
        <taxon>Eukaryota</taxon>
        <taxon>Metazoa</taxon>
        <taxon>Chordata</taxon>
        <taxon>Craniata</taxon>
        <taxon>Vertebrata</taxon>
        <taxon>Euteleostomi</taxon>
        <taxon>Mammalia</taxon>
        <taxon>Eutheria</taxon>
        <taxon>Laurasiatheria</taxon>
        <taxon>Artiodactyla</taxon>
        <taxon>Ruminantia</taxon>
        <taxon>Pecora</taxon>
        <taxon>Bovidae</taxon>
        <taxon>Bovinae</taxon>
        <taxon>Bos</taxon>
    </lineage>
</organism>
<protein>
    <recommendedName>
        <fullName>Uncharacterized protein C5orf46 homolog</fullName>
    </recommendedName>
</protein>
<name>CE046_BOVIN</name>
<proteinExistence type="inferred from homology"/>
<feature type="signal peptide" evidence="1">
    <location>
        <begin position="1"/>
        <end position="23"/>
    </location>
</feature>
<feature type="chain" id="PRO_0000317635" description="Uncharacterized protein C5orf46 homolog">
    <location>
        <begin position="24"/>
        <end position="88"/>
    </location>
</feature>
<feature type="region of interest" description="Disordered" evidence="2">
    <location>
        <begin position="25"/>
        <end position="45"/>
    </location>
</feature>
<feature type="compositionally biased region" description="Basic and acidic residues" evidence="2">
    <location>
        <begin position="25"/>
        <end position="40"/>
    </location>
</feature>
<dbReference type="EMBL" id="BC102132">
    <property type="protein sequence ID" value="AAI02133.1"/>
    <property type="molecule type" value="mRNA"/>
</dbReference>
<dbReference type="RefSeq" id="NP_001193263.1">
    <property type="nucleotide sequence ID" value="NM_001206334.1"/>
</dbReference>
<dbReference type="FunCoup" id="Q3T146">
    <property type="interactions" value="3"/>
</dbReference>
<dbReference type="PaxDb" id="9913-ENSBTAP00000020555"/>
<dbReference type="GeneID" id="614113"/>
<dbReference type="KEGG" id="bta:614113"/>
<dbReference type="CTD" id="614113"/>
<dbReference type="eggNOG" id="ENOG502TEYM">
    <property type="taxonomic scope" value="Eukaryota"/>
</dbReference>
<dbReference type="HOGENOM" id="CLU_171946_0_0_1"/>
<dbReference type="InParanoid" id="Q3T146"/>
<dbReference type="OrthoDB" id="9539876at2759"/>
<dbReference type="TreeFam" id="TF338370"/>
<dbReference type="Proteomes" id="UP000009136">
    <property type="component" value="Unplaced"/>
</dbReference>
<dbReference type="GO" id="GO:0005576">
    <property type="term" value="C:extracellular region"/>
    <property type="evidence" value="ECO:0007669"/>
    <property type="project" value="UniProtKB-SubCell"/>
</dbReference>
<dbReference type="InterPro" id="IPR027950">
    <property type="entry name" value="DUF4576"/>
</dbReference>
<dbReference type="PANTHER" id="PTHR37864">
    <property type="entry name" value="SIMILAR TO AVLV472"/>
    <property type="match status" value="1"/>
</dbReference>
<dbReference type="PANTHER" id="PTHR37864:SF1">
    <property type="entry name" value="SIMILAR TO AVLV472"/>
    <property type="match status" value="1"/>
</dbReference>
<dbReference type="Pfam" id="PF15144">
    <property type="entry name" value="DUF4576"/>
    <property type="match status" value="1"/>
</dbReference>
<comment type="subcellular location">
    <subcellularLocation>
        <location evidence="3">Secreted</location>
    </subcellularLocation>
</comment>
<reference key="1">
    <citation type="submission" date="2005-08" db="EMBL/GenBank/DDBJ databases">
        <authorList>
            <consortium name="NIH - Mammalian Gene Collection (MGC) project"/>
        </authorList>
    </citation>
    <scope>NUCLEOTIDE SEQUENCE [LARGE SCALE MRNA]</scope>
    <source>
        <strain>Crossbred X Angus</strain>
        <tissue>Ileum</tissue>
    </source>
</reference>
<keyword id="KW-1185">Reference proteome</keyword>
<keyword id="KW-0964">Secreted</keyword>
<keyword id="KW-0732">Signal</keyword>
<accession>Q3T146</accession>
<evidence type="ECO:0000255" key="1"/>
<evidence type="ECO:0000256" key="2">
    <source>
        <dbReference type="SAM" id="MobiDB-lite"/>
    </source>
</evidence>
<evidence type="ECO:0000305" key="3"/>
<sequence length="88" mass="9735">MAVSGLRLTIVWGLLVLILTCQADDKPEGKPDEQPHDSGKNSEPAFPKFLNILGSDIIENAVEFILRSMTRSTEFLEHGDKQGEHSSK</sequence>